<name>APAG_MARMM</name>
<protein>
    <recommendedName>
        <fullName evidence="1">Protein ApaG</fullName>
    </recommendedName>
</protein>
<accession>Q0ASF3</accession>
<organism>
    <name type="scientific">Maricaulis maris (strain MCS10)</name>
    <name type="common">Caulobacter maris</name>
    <dbReference type="NCBI Taxonomy" id="394221"/>
    <lineage>
        <taxon>Bacteria</taxon>
        <taxon>Pseudomonadati</taxon>
        <taxon>Pseudomonadota</taxon>
        <taxon>Alphaproteobacteria</taxon>
        <taxon>Maricaulales</taxon>
        <taxon>Maricaulaceae</taxon>
        <taxon>Maricaulis</taxon>
    </lineage>
</organism>
<feature type="chain" id="PRO_1000133794" description="Protein ApaG">
    <location>
        <begin position="1"/>
        <end position="130"/>
    </location>
</feature>
<feature type="domain" description="ApaG" evidence="1">
    <location>
        <begin position="3"/>
        <end position="127"/>
    </location>
</feature>
<evidence type="ECO:0000255" key="1">
    <source>
        <dbReference type="HAMAP-Rule" id="MF_00791"/>
    </source>
</evidence>
<dbReference type="EMBL" id="CP000449">
    <property type="protein sequence ID" value="ABI64784.1"/>
    <property type="molecule type" value="Genomic_DNA"/>
</dbReference>
<dbReference type="RefSeq" id="WP_011642431.1">
    <property type="nucleotide sequence ID" value="NC_008347.1"/>
</dbReference>
<dbReference type="SMR" id="Q0ASF3"/>
<dbReference type="STRING" id="394221.Mmar10_0491"/>
<dbReference type="KEGG" id="mmr:Mmar10_0491"/>
<dbReference type="eggNOG" id="COG2967">
    <property type="taxonomic scope" value="Bacteria"/>
</dbReference>
<dbReference type="HOGENOM" id="CLU_128074_1_0_5"/>
<dbReference type="OrthoDB" id="9795226at2"/>
<dbReference type="Proteomes" id="UP000001964">
    <property type="component" value="Chromosome"/>
</dbReference>
<dbReference type="Gene3D" id="2.60.40.1470">
    <property type="entry name" value="ApaG domain"/>
    <property type="match status" value="1"/>
</dbReference>
<dbReference type="HAMAP" id="MF_00791">
    <property type="entry name" value="ApaG"/>
    <property type="match status" value="1"/>
</dbReference>
<dbReference type="InterPro" id="IPR050718">
    <property type="entry name" value="ApaG-like"/>
</dbReference>
<dbReference type="InterPro" id="IPR007474">
    <property type="entry name" value="ApaG_domain"/>
</dbReference>
<dbReference type="InterPro" id="IPR036767">
    <property type="entry name" value="ApaG_sf"/>
</dbReference>
<dbReference type="InterPro" id="IPR023065">
    <property type="entry name" value="Uncharacterised_ApaG"/>
</dbReference>
<dbReference type="NCBIfam" id="NF003967">
    <property type="entry name" value="PRK05461.1"/>
    <property type="match status" value="1"/>
</dbReference>
<dbReference type="PANTHER" id="PTHR47191">
    <property type="entry name" value="OS05G0170800 PROTEIN"/>
    <property type="match status" value="1"/>
</dbReference>
<dbReference type="PANTHER" id="PTHR47191:SF2">
    <property type="entry name" value="OS05G0170800 PROTEIN"/>
    <property type="match status" value="1"/>
</dbReference>
<dbReference type="Pfam" id="PF04379">
    <property type="entry name" value="DUF525"/>
    <property type="match status" value="1"/>
</dbReference>
<dbReference type="SUPFAM" id="SSF110069">
    <property type="entry name" value="ApaG-like"/>
    <property type="match status" value="1"/>
</dbReference>
<dbReference type="PROSITE" id="PS51087">
    <property type="entry name" value="APAG"/>
    <property type="match status" value="1"/>
</dbReference>
<keyword id="KW-1185">Reference proteome</keyword>
<proteinExistence type="inferred from homology"/>
<reference key="1">
    <citation type="submission" date="2006-08" db="EMBL/GenBank/DDBJ databases">
        <title>Complete sequence of Maricaulis maris MCS10.</title>
        <authorList>
            <consortium name="US DOE Joint Genome Institute"/>
            <person name="Copeland A."/>
            <person name="Lucas S."/>
            <person name="Lapidus A."/>
            <person name="Barry K."/>
            <person name="Detter J.C."/>
            <person name="Glavina del Rio T."/>
            <person name="Hammon N."/>
            <person name="Israni S."/>
            <person name="Dalin E."/>
            <person name="Tice H."/>
            <person name="Pitluck S."/>
            <person name="Saunders E."/>
            <person name="Brettin T."/>
            <person name="Bruce D."/>
            <person name="Han C."/>
            <person name="Tapia R."/>
            <person name="Gilna P."/>
            <person name="Schmutz J."/>
            <person name="Larimer F."/>
            <person name="Land M."/>
            <person name="Hauser L."/>
            <person name="Kyrpides N."/>
            <person name="Mikhailova N."/>
            <person name="Viollier P."/>
            <person name="Stephens C."/>
            <person name="Richardson P."/>
        </authorList>
    </citation>
    <scope>NUCLEOTIDE SEQUENCE [LARGE SCALE GENOMIC DNA]</scope>
    <source>
        <strain>MCS10</strain>
    </source>
</reference>
<gene>
    <name evidence="1" type="primary">apaG</name>
    <name type="ordered locus">Mmar10_0491</name>
</gene>
<sequence length="130" mass="14583">MYEHESCGVRISVSPDYLEDESTPEEGRFVWAYTIEIENTGKQPVQLIARKWMITDANGRTEHVQGMGVIGEQPVIEPGGRFRYTSGAPLPTPSGFMSGSYEMRRGDGESFAATIPDFSLDRPSDRLWLH</sequence>